<evidence type="ECO:0000255" key="1">
    <source>
        <dbReference type="HAMAP-Rule" id="MF_00605"/>
    </source>
</evidence>
<proteinExistence type="inferred from homology"/>
<feature type="chain" id="PRO_0000060322" description="tRNA (guanine-N(1)-)-methyltransferase">
    <location>
        <begin position="1"/>
        <end position="244"/>
    </location>
</feature>
<feature type="binding site" evidence="1">
    <location>
        <position position="113"/>
    </location>
    <ligand>
        <name>S-adenosyl-L-methionine</name>
        <dbReference type="ChEBI" id="CHEBI:59789"/>
    </ligand>
</feature>
<feature type="binding site" evidence="1">
    <location>
        <begin position="133"/>
        <end position="138"/>
    </location>
    <ligand>
        <name>S-adenosyl-L-methionine</name>
        <dbReference type="ChEBI" id="CHEBI:59789"/>
    </ligand>
</feature>
<protein>
    <recommendedName>
        <fullName evidence="1">tRNA (guanine-N(1)-)-methyltransferase</fullName>
        <ecNumber evidence="1">2.1.1.228</ecNumber>
    </recommendedName>
    <alternativeName>
        <fullName evidence="1">M1G-methyltransferase</fullName>
    </alternativeName>
    <alternativeName>
        <fullName evidence="1">tRNA [GM37] methyltransferase</fullName>
    </alternativeName>
</protein>
<gene>
    <name evidence="1" type="primary">trmD</name>
    <name type="ordered locus">BCE33L3600</name>
</gene>
<name>TRMD_BACCZ</name>
<sequence>MKIDILTLFPDMFTGVFGSSILKKAQEKEAVELRVVNFRDYTTSKHNSVDDYPYGGGAGMVLTPQPIFDAVEDLTKETERKPRVVLMCPQGERFTQKKAEELAEEEHLIFVCGHYEGYDERIREHLVTDEISIGDYVLTGGELASMVITDSVVRLLPGVLGNHASQVEDSFSTGLLEHPHYTRPADFRGMKVPDVLMSGNHKNIDEWRHKESLRRTYTRRPDLLEERELSKQEKKWLEQIKEGK</sequence>
<accession>Q636I5</accession>
<organism>
    <name type="scientific">Bacillus cereus (strain ZK / E33L)</name>
    <dbReference type="NCBI Taxonomy" id="288681"/>
    <lineage>
        <taxon>Bacteria</taxon>
        <taxon>Bacillati</taxon>
        <taxon>Bacillota</taxon>
        <taxon>Bacilli</taxon>
        <taxon>Bacillales</taxon>
        <taxon>Bacillaceae</taxon>
        <taxon>Bacillus</taxon>
        <taxon>Bacillus cereus group</taxon>
    </lineage>
</organism>
<reference key="1">
    <citation type="journal article" date="2006" name="J. Bacteriol.">
        <title>Pathogenomic sequence analysis of Bacillus cereus and Bacillus thuringiensis isolates closely related to Bacillus anthracis.</title>
        <authorList>
            <person name="Han C.S."/>
            <person name="Xie G."/>
            <person name="Challacombe J.F."/>
            <person name="Altherr M.R."/>
            <person name="Bhotika S.S."/>
            <person name="Bruce D."/>
            <person name="Campbell C.S."/>
            <person name="Campbell M.L."/>
            <person name="Chen J."/>
            <person name="Chertkov O."/>
            <person name="Cleland C."/>
            <person name="Dimitrijevic M."/>
            <person name="Doggett N.A."/>
            <person name="Fawcett J.J."/>
            <person name="Glavina T."/>
            <person name="Goodwin L.A."/>
            <person name="Hill K.K."/>
            <person name="Hitchcock P."/>
            <person name="Jackson P.J."/>
            <person name="Keim P."/>
            <person name="Kewalramani A.R."/>
            <person name="Longmire J."/>
            <person name="Lucas S."/>
            <person name="Malfatti S."/>
            <person name="McMurry K."/>
            <person name="Meincke L.J."/>
            <person name="Misra M."/>
            <person name="Moseman B.L."/>
            <person name="Mundt M."/>
            <person name="Munk A.C."/>
            <person name="Okinaka R.T."/>
            <person name="Parson-Quintana B."/>
            <person name="Reilly L.P."/>
            <person name="Richardson P."/>
            <person name="Robinson D.L."/>
            <person name="Rubin E."/>
            <person name="Saunders E."/>
            <person name="Tapia R."/>
            <person name="Tesmer J.G."/>
            <person name="Thayer N."/>
            <person name="Thompson L.S."/>
            <person name="Tice H."/>
            <person name="Ticknor L.O."/>
            <person name="Wills P.L."/>
            <person name="Brettin T.S."/>
            <person name="Gilna P."/>
        </authorList>
    </citation>
    <scope>NUCLEOTIDE SEQUENCE [LARGE SCALE GENOMIC DNA]</scope>
    <source>
        <strain>ZK / E33L</strain>
    </source>
</reference>
<keyword id="KW-0963">Cytoplasm</keyword>
<keyword id="KW-0489">Methyltransferase</keyword>
<keyword id="KW-0949">S-adenosyl-L-methionine</keyword>
<keyword id="KW-0808">Transferase</keyword>
<keyword id="KW-0819">tRNA processing</keyword>
<dbReference type="EC" id="2.1.1.228" evidence="1"/>
<dbReference type="EMBL" id="CP000001">
    <property type="protein sequence ID" value="AAU16666.1"/>
    <property type="molecule type" value="Genomic_DNA"/>
</dbReference>
<dbReference type="RefSeq" id="WP_000686892.1">
    <property type="nucleotide sequence ID" value="NZ_CP009968.1"/>
</dbReference>
<dbReference type="SMR" id="Q636I5"/>
<dbReference type="GeneID" id="93007271"/>
<dbReference type="KEGG" id="bcz:BCE33L3600"/>
<dbReference type="PATRIC" id="fig|288681.22.peg.1811"/>
<dbReference type="Proteomes" id="UP000002612">
    <property type="component" value="Chromosome"/>
</dbReference>
<dbReference type="GO" id="GO:0005829">
    <property type="term" value="C:cytosol"/>
    <property type="evidence" value="ECO:0007669"/>
    <property type="project" value="TreeGrafter"/>
</dbReference>
<dbReference type="GO" id="GO:0052906">
    <property type="term" value="F:tRNA (guanine(37)-N1)-methyltransferase activity"/>
    <property type="evidence" value="ECO:0007669"/>
    <property type="project" value="UniProtKB-UniRule"/>
</dbReference>
<dbReference type="GO" id="GO:0002939">
    <property type="term" value="P:tRNA N1-guanine methylation"/>
    <property type="evidence" value="ECO:0007669"/>
    <property type="project" value="TreeGrafter"/>
</dbReference>
<dbReference type="CDD" id="cd18080">
    <property type="entry name" value="TrmD-like"/>
    <property type="match status" value="1"/>
</dbReference>
<dbReference type="FunFam" id="1.10.1270.20:FF:000001">
    <property type="entry name" value="tRNA (guanine-N(1)-)-methyltransferase"/>
    <property type="match status" value="1"/>
</dbReference>
<dbReference type="FunFam" id="3.40.1280.10:FF:000001">
    <property type="entry name" value="tRNA (guanine-N(1)-)-methyltransferase"/>
    <property type="match status" value="1"/>
</dbReference>
<dbReference type="Gene3D" id="3.40.1280.10">
    <property type="match status" value="1"/>
</dbReference>
<dbReference type="Gene3D" id="1.10.1270.20">
    <property type="entry name" value="tRNA(m1g37)methyltransferase, domain 2"/>
    <property type="match status" value="1"/>
</dbReference>
<dbReference type="HAMAP" id="MF_00605">
    <property type="entry name" value="TrmD"/>
    <property type="match status" value="1"/>
</dbReference>
<dbReference type="InterPro" id="IPR029028">
    <property type="entry name" value="Alpha/beta_knot_MTases"/>
</dbReference>
<dbReference type="InterPro" id="IPR023148">
    <property type="entry name" value="tRNA_m1G_MeTrfase_C_sf"/>
</dbReference>
<dbReference type="InterPro" id="IPR002649">
    <property type="entry name" value="tRNA_m1G_MeTrfase_TrmD"/>
</dbReference>
<dbReference type="InterPro" id="IPR029026">
    <property type="entry name" value="tRNA_m1G_MTases_N"/>
</dbReference>
<dbReference type="InterPro" id="IPR016009">
    <property type="entry name" value="tRNA_MeTrfase_TRMD/TRM10"/>
</dbReference>
<dbReference type="NCBIfam" id="NF000648">
    <property type="entry name" value="PRK00026.1"/>
    <property type="match status" value="1"/>
</dbReference>
<dbReference type="NCBIfam" id="TIGR00088">
    <property type="entry name" value="trmD"/>
    <property type="match status" value="1"/>
</dbReference>
<dbReference type="PANTHER" id="PTHR46417">
    <property type="entry name" value="TRNA (GUANINE-N(1)-)-METHYLTRANSFERASE"/>
    <property type="match status" value="1"/>
</dbReference>
<dbReference type="PANTHER" id="PTHR46417:SF1">
    <property type="entry name" value="TRNA (GUANINE-N(1)-)-METHYLTRANSFERASE"/>
    <property type="match status" value="1"/>
</dbReference>
<dbReference type="Pfam" id="PF01746">
    <property type="entry name" value="tRNA_m1G_MT"/>
    <property type="match status" value="1"/>
</dbReference>
<dbReference type="PIRSF" id="PIRSF000386">
    <property type="entry name" value="tRNA_mtase"/>
    <property type="match status" value="1"/>
</dbReference>
<dbReference type="SUPFAM" id="SSF75217">
    <property type="entry name" value="alpha/beta knot"/>
    <property type="match status" value="1"/>
</dbReference>
<comment type="function">
    <text evidence="1">Specifically methylates guanosine-37 in various tRNAs.</text>
</comment>
<comment type="catalytic activity">
    <reaction evidence="1">
        <text>guanosine(37) in tRNA + S-adenosyl-L-methionine = N(1)-methylguanosine(37) in tRNA + S-adenosyl-L-homocysteine + H(+)</text>
        <dbReference type="Rhea" id="RHEA:36899"/>
        <dbReference type="Rhea" id="RHEA-COMP:10145"/>
        <dbReference type="Rhea" id="RHEA-COMP:10147"/>
        <dbReference type="ChEBI" id="CHEBI:15378"/>
        <dbReference type="ChEBI" id="CHEBI:57856"/>
        <dbReference type="ChEBI" id="CHEBI:59789"/>
        <dbReference type="ChEBI" id="CHEBI:73542"/>
        <dbReference type="ChEBI" id="CHEBI:74269"/>
        <dbReference type="EC" id="2.1.1.228"/>
    </reaction>
</comment>
<comment type="subunit">
    <text evidence="1">Homodimer.</text>
</comment>
<comment type="subcellular location">
    <subcellularLocation>
        <location evidence="1">Cytoplasm</location>
    </subcellularLocation>
</comment>
<comment type="similarity">
    <text evidence="1">Belongs to the RNA methyltransferase TrmD family.</text>
</comment>